<name>GLGC2_VIBVU</name>
<reference key="1">
    <citation type="submission" date="2002-12" db="EMBL/GenBank/DDBJ databases">
        <title>Complete genome sequence of Vibrio vulnificus CMCP6.</title>
        <authorList>
            <person name="Rhee J.H."/>
            <person name="Kim S.Y."/>
            <person name="Chung S.S."/>
            <person name="Kim J.J."/>
            <person name="Moon Y.H."/>
            <person name="Jeong H."/>
            <person name="Choy H.E."/>
        </authorList>
    </citation>
    <scope>NUCLEOTIDE SEQUENCE [LARGE SCALE GENOMIC DNA]</scope>
    <source>
        <strain>CMCP6</strain>
    </source>
</reference>
<accession>Q8D7E0</accession>
<comment type="function">
    <text evidence="1">Involved in the biosynthesis of ADP-glucose, a building block required for the elongation reactions to produce glycogen. Catalyzes the reaction between ATP and alpha-D-glucose 1-phosphate (G1P) to produce pyrophosphate and ADP-Glc.</text>
</comment>
<comment type="catalytic activity">
    <reaction evidence="1">
        <text>alpha-D-glucose 1-phosphate + ATP + H(+) = ADP-alpha-D-glucose + diphosphate</text>
        <dbReference type="Rhea" id="RHEA:12120"/>
        <dbReference type="ChEBI" id="CHEBI:15378"/>
        <dbReference type="ChEBI" id="CHEBI:30616"/>
        <dbReference type="ChEBI" id="CHEBI:33019"/>
        <dbReference type="ChEBI" id="CHEBI:57498"/>
        <dbReference type="ChEBI" id="CHEBI:58601"/>
        <dbReference type="EC" id="2.7.7.27"/>
    </reaction>
</comment>
<comment type="pathway">
    <text evidence="1">Glycan biosynthesis; glycogen biosynthesis.</text>
</comment>
<comment type="subunit">
    <text evidence="1">Homotetramer.</text>
</comment>
<comment type="similarity">
    <text evidence="1">Belongs to the bacterial/plant glucose-1-phosphate adenylyltransferase family.</text>
</comment>
<sequence>MQDILTVILAGGMGSRLSPLTDDRAKPAVPFGGKYRIIDFTLTNCLHSGLRKILVLTQYKSHSLQKHLRDGWSIFNPELGEYITSVPPQMRKGGKWYEGTADAIYHNLWLLERSEAKYVMVLSGDHIYRMDYAPMLEEHIANNAALTVACMDVNCKEAKAFGVMGIDERHRVHSFVEKPQNPPHLPNDPERSLVSMGIYIFSMEVLQQALIEDADDDASSHDFGKDIIPKLIDTGSVFAYKFCGSKGRVDKDCYWRDVGTIDSFYQANMDLLEPIPPMNLYQKDWGIRTYEPQYPPARTVSSGSGNEGIFINSIIANGVINSGGSVQHSIVSSNVRINDSATVVDSIIFDDVEIGEGCQLVNCIIDKHVKVPPYTQIGLNRLEDAQRFKISENGIVVVPESYQF</sequence>
<proteinExistence type="inferred from homology"/>
<protein>
    <recommendedName>
        <fullName evidence="1">Glucose-1-phosphate adenylyltransferase 2</fullName>
        <ecNumber evidence="1">2.7.7.27</ecNumber>
    </recommendedName>
    <alternativeName>
        <fullName evidence="1">ADP-glucose pyrophosphorylase 2</fullName>
        <shortName evidence="1">ADPGlc PPase 2</shortName>
    </alternativeName>
    <alternativeName>
        <fullName evidence="1">ADP-glucose synthase 2</fullName>
    </alternativeName>
</protein>
<feature type="chain" id="PRO_0000195349" description="Glucose-1-phosphate adenylyltransferase 2">
    <location>
        <begin position="1"/>
        <end position="404"/>
    </location>
</feature>
<feature type="binding site" evidence="1">
    <location>
        <position position="97"/>
    </location>
    <ligand>
        <name>alpha-D-glucose 1-phosphate</name>
        <dbReference type="ChEBI" id="CHEBI:58601"/>
    </ligand>
</feature>
<feature type="binding site" evidence="1">
    <location>
        <position position="162"/>
    </location>
    <ligand>
        <name>alpha-D-glucose 1-phosphate</name>
        <dbReference type="ChEBI" id="CHEBI:58601"/>
    </ligand>
</feature>
<feature type="binding site" evidence="1">
    <location>
        <begin position="177"/>
        <end position="178"/>
    </location>
    <ligand>
        <name>alpha-D-glucose 1-phosphate</name>
        <dbReference type="ChEBI" id="CHEBI:58601"/>
    </ligand>
</feature>
<feature type="binding site" evidence="1">
    <location>
        <position position="195"/>
    </location>
    <ligand>
        <name>alpha-D-glucose 1-phosphate</name>
        <dbReference type="ChEBI" id="CHEBI:58601"/>
    </ligand>
</feature>
<keyword id="KW-0067">ATP-binding</keyword>
<keyword id="KW-0119">Carbohydrate metabolism</keyword>
<keyword id="KW-0320">Glycogen biosynthesis</keyword>
<keyword id="KW-0321">Glycogen metabolism</keyword>
<keyword id="KW-0547">Nucleotide-binding</keyword>
<keyword id="KW-0548">Nucleotidyltransferase</keyword>
<keyword id="KW-0808">Transferase</keyword>
<organism>
    <name type="scientific">Vibrio vulnificus (strain CMCP6)</name>
    <dbReference type="NCBI Taxonomy" id="216895"/>
    <lineage>
        <taxon>Bacteria</taxon>
        <taxon>Pseudomonadati</taxon>
        <taxon>Pseudomonadota</taxon>
        <taxon>Gammaproteobacteria</taxon>
        <taxon>Vibrionales</taxon>
        <taxon>Vibrionaceae</taxon>
        <taxon>Vibrio</taxon>
    </lineage>
</organism>
<dbReference type="EC" id="2.7.7.27" evidence="1"/>
<dbReference type="EMBL" id="AE016796">
    <property type="protein sequence ID" value="AAO07186.1"/>
    <property type="molecule type" value="Genomic_DNA"/>
</dbReference>
<dbReference type="SMR" id="Q8D7E0"/>
<dbReference type="KEGG" id="vvu:VV2_0214"/>
<dbReference type="HOGENOM" id="CLU_029499_14_1_6"/>
<dbReference type="UniPathway" id="UPA00164"/>
<dbReference type="Proteomes" id="UP000002275">
    <property type="component" value="Chromosome 2"/>
</dbReference>
<dbReference type="GO" id="GO:0005524">
    <property type="term" value="F:ATP binding"/>
    <property type="evidence" value="ECO:0007669"/>
    <property type="project" value="UniProtKB-KW"/>
</dbReference>
<dbReference type="GO" id="GO:0008878">
    <property type="term" value="F:glucose-1-phosphate adenylyltransferase activity"/>
    <property type="evidence" value="ECO:0007669"/>
    <property type="project" value="UniProtKB-UniRule"/>
</dbReference>
<dbReference type="GO" id="GO:0005978">
    <property type="term" value="P:glycogen biosynthetic process"/>
    <property type="evidence" value="ECO:0007669"/>
    <property type="project" value="UniProtKB-UniRule"/>
</dbReference>
<dbReference type="CDD" id="cd02508">
    <property type="entry name" value="ADP_Glucose_PP"/>
    <property type="match status" value="1"/>
</dbReference>
<dbReference type="CDD" id="cd04651">
    <property type="entry name" value="LbH_G1P_AT_C"/>
    <property type="match status" value="1"/>
</dbReference>
<dbReference type="Gene3D" id="2.160.10.10">
    <property type="entry name" value="Hexapeptide repeat proteins"/>
    <property type="match status" value="1"/>
</dbReference>
<dbReference type="Gene3D" id="3.90.550.10">
    <property type="entry name" value="Spore Coat Polysaccharide Biosynthesis Protein SpsA, Chain A"/>
    <property type="match status" value="1"/>
</dbReference>
<dbReference type="HAMAP" id="MF_00624">
    <property type="entry name" value="GlgC"/>
    <property type="match status" value="1"/>
</dbReference>
<dbReference type="InterPro" id="IPR011831">
    <property type="entry name" value="ADP-Glc_PPase"/>
</dbReference>
<dbReference type="InterPro" id="IPR005836">
    <property type="entry name" value="ADP_Glu_pyroP_CS"/>
</dbReference>
<dbReference type="InterPro" id="IPR023049">
    <property type="entry name" value="GlgC_bac"/>
</dbReference>
<dbReference type="InterPro" id="IPR056818">
    <property type="entry name" value="GlmU/GlgC-like_hexapep"/>
</dbReference>
<dbReference type="InterPro" id="IPR005835">
    <property type="entry name" value="NTP_transferase_dom"/>
</dbReference>
<dbReference type="InterPro" id="IPR029044">
    <property type="entry name" value="Nucleotide-diphossugar_trans"/>
</dbReference>
<dbReference type="InterPro" id="IPR011004">
    <property type="entry name" value="Trimer_LpxA-like_sf"/>
</dbReference>
<dbReference type="NCBIfam" id="TIGR02091">
    <property type="entry name" value="glgC"/>
    <property type="match status" value="1"/>
</dbReference>
<dbReference type="NCBIfam" id="NF001947">
    <property type="entry name" value="PRK00725.1"/>
    <property type="match status" value="1"/>
</dbReference>
<dbReference type="NCBIfam" id="NF002023">
    <property type="entry name" value="PRK00844.1"/>
    <property type="match status" value="1"/>
</dbReference>
<dbReference type="PANTHER" id="PTHR43523:SF2">
    <property type="entry name" value="GLUCOSE-1-PHOSPHATE ADENYLYLTRANSFERASE"/>
    <property type="match status" value="1"/>
</dbReference>
<dbReference type="PANTHER" id="PTHR43523">
    <property type="entry name" value="GLUCOSE-1-PHOSPHATE ADENYLYLTRANSFERASE-RELATED"/>
    <property type="match status" value="1"/>
</dbReference>
<dbReference type="Pfam" id="PF24894">
    <property type="entry name" value="Hexapep_GlmU"/>
    <property type="match status" value="1"/>
</dbReference>
<dbReference type="Pfam" id="PF00483">
    <property type="entry name" value="NTP_transferase"/>
    <property type="match status" value="1"/>
</dbReference>
<dbReference type="SUPFAM" id="SSF53448">
    <property type="entry name" value="Nucleotide-diphospho-sugar transferases"/>
    <property type="match status" value="1"/>
</dbReference>
<dbReference type="SUPFAM" id="SSF51161">
    <property type="entry name" value="Trimeric LpxA-like enzymes"/>
    <property type="match status" value="1"/>
</dbReference>
<dbReference type="PROSITE" id="PS00808">
    <property type="entry name" value="ADP_GLC_PYROPHOSPH_1"/>
    <property type="match status" value="1"/>
</dbReference>
<dbReference type="PROSITE" id="PS00809">
    <property type="entry name" value="ADP_GLC_PYROPHOSPH_2"/>
    <property type="match status" value="1"/>
</dbReference>
<dbReference type="PROSITE" id="PS00810">
    <property type="entry name" value="ADP_GLC_PYROPHOSPH_3"/>
    <property type="match status" value="1"/>
</dbReference>
<evidence type="ECO:0000255" key="1">
    <source>
        <dbReference type="HAMAP-Rule" id="MF_00624"/>
    </source>
</evidence>
<gene>
    <name evidence="1" type="primary">glgC2</name>
    <name type="ordered locus">VV2_0214</name>
</gene>